<feature type="chain" id="PRO_0000452163" description="Adenine-specific methyltransferase BrxX">
    <location>
        <begin position="1"/>
        <end position="1205"/>
    </location>
</feature>
<dbReference type="EC" id="2.1.1.72" evidence="1 3"/>
<dbReference type="EMBL" id="CP000802">
    <property type="protein sequence ID" value="ABV04727.1"/>
    <property type="molecule type" value="Genomic_DNA"/>
</dbReference>
<dbReference type="RefSeq" id="WP_001095585.1">
    <property type="nucleotide sequence ID" value="NC_009800.1"/>
</dbReference>
<dbReference type="PDB" id="9EWZ">
    <property type="method" value="EM"/>
    <property type="resolution" value="2.22 A"/>
    <property type="chains" value="C=1-1205"/>
</dbReference>
<dbReference type="PDB" id="9EX7">
    <property type="method" value="EM"/>
    <property type="resolution" value="2.91 A"/>
    <property type="chains" value="A/B=1-1205"/>
</dbReference>
<dbReference type="PDB" id="9EXH">
    <property type="method" value="EM"/>
    <property type="resolution" value="3.90 A"/>
    <property type="chains" value="A=1-1205"/>
</dbReference>
<dbReference type="PDBsum" id="9EWZ"/>
<dbReference type="PDBsum" id="9EX7"/>
<dbReference type="PDBsum" id="9EXH"/>
<dbReference type="EMDB" id="EMD-50027"/>
<dbReference type="EMDB" id="EMD-50032"/>
<dbReference type="EMDB" id="EMD-50038"/>
<dbReference type="SMR" id="P0DUF9"/>
<dbReference type="REBASE" id="16127">
    <property type="entry name" value="M.EcoHSI"/>
</dbReference>
<dbReference type="KEGG" id="ecx:EcHS_A0339"/>
<dbReference type="GO" id="GO:0003676">
    <property type="term" value="F:nucleic acid binding"/>
    <property type="evidence" value="ECO:0007669"/>
    <property type="project" value="InterPro"/>
</dbReference>
<dbReference type="GO" id="GO:0009007">
    <property type="term" value="F:site-specific DNA-methyltransferase (adenine-specific) activity"/>
    <property type="evidence" value="ECO:0007669"/>
    <property type="project" value="UniProtKB-EC"/>
</dbReference>
<dbReference type="GO" id="GO:0051607">
    <property type="term" value="P:defense response to virus"/>
    <property type="evidence" value="ECO:0007669"/>
    <property type="project" value="UniProtKB-KW"/>
</dbReference>
<dbReference type="GO" id="GO:0006304">
    <property type="term" value="P:DNA modification"/>
    <property type="evidence" value="ECO:0007669"/>
    <property type="project" value="InterPro"/>
</dbReference>
<dbReference type="GO" id="GO:0032259">
    <property type="term" value="P:methylation"/>
    <property type="evidence" value="ECO:0007669"/>
    <property type="project" value="UniProtKB-KW"/>
</dbReference>
<dbReference type="Gene3D" id="3.40.50.150">
    <property type="entry name" value="Vaccinia Virus protein VP39"/>
    <property type="match status" value="1"/>
</dbReference>
<dbReference type="InterPro" id="IPR047939">
    <property type="entry name" value="BREX_1_PglX"/>
</dbReference>
<dbReference type="InterPro" id="IPR002052">
    <property type="entry name" value="DNA_methylase_N6_adenine_CS"/>
</dbReference>
<dbReference type="InterPro" id="IPR011639">
    <property type="entry name" value="MethylTrfase_TaqI-like_dom"/>
</dbReference>
<dbReference type="InterPro" id="IPR050953">
    <property type="entry name" value="N4_N6_ade-DNA_methylase"/>
</dbReference>
<dbReference type="InterPro" id="IPR029063">
    <property type="entry name" value="SAM-dependent_MTases_sf"/>
</dbReference>
<dbReference type="NCBIfam" id="NF033452">
    <property type="entry name" value="BREX_1_MTaseX"/>
    <property type="match status" value="1"/>
</dbReference>
<dbReference type="PANTHER" id="PTHR33841:SF1">
    <property type="entry name" value="DNA METHYLTRANSFERASE A"/>
    <property type="match status" value="1"/>
</dbReference>
<dbReference type="PANTHER" id="PTHR33841">
    <property type="entry name" value="DNA METHYLTRANSFERASE YEEA-RELATED"/>
    <property type="match status" value="1"/>
</dbReference>
<dbReference type="Pfam" id="PF07669">
    <property type="entry name" value="Eco57I"/>
    <property type="match status" value="1"/>
</dbReference>
<dbReference type="PRINTS" id="PR00507">
    <property type="entry name" value="N12N6MTFRASE"/>
</dbReference>
<dbReference type="SUPFAM" id="SSF53335">
    <property type="entry name" value="S-adenosyl-L-methionine-dependent methyltransferases"/>
    <property type="match status" value="1"/>
</dbReference>
<dbReference type="PROSITE" id="PS00092">
    <property type="entry name" value="N6_MTASE"/>
    <property type="match status" value="1"/>
</dbReference>
<dbReference type="PROSITE" id="PS00589">
    <property type="entry name" value="PTS_HPR_SER"/>
    <property type="match status" value="1"/>
</dbReference>
<sequence>MNTNNIKKYAPQARNDFRDAVIQKLTTLGIAADKKGNLQIAEAETIGETVRYGQFDYPLSTLPRRERLVKRAREQGFEVLVEHCAYTWFNRLCAIRYMELHGYLDHGFRMLSHPETPTAFEVLDHVPEVAEALLPESKAQLVEMKLSGNQDEALYRELLLGQCHALHHAMPFLFEAVDDEAELLLPDNLTRTDSILRGLVDDIPEEDWEQVEVIGWLYQFYISEKKDAVIGKVVKSEDIPAATQLFTPNWIVQYLVQNSVGRQWLQTYPDSPLKDKMEYYIEPAEQTPEVQAQLAAITPASIEPESIKVLDPACGSGHILTEAYNVLKAIYEERGYRTRDIPQLILENNIFGLDIDDRAAQLSGFAMLMLARQDDRRILGRGVRLNIVSLQESKLDIAEVWTKLNFHQHMQRGSMGDMFTQGTALANTDSAEYKLLMRTLALFTSAKTLGSLIQVPQEDEAALKAFLERLYRLAVEGDIQQKEAAAELIPYIQQAWILAQRYDAVVANPPYMGGKGMNGDLKEFAKKQFPDSKSDLFAMFMQHAFSLLKENGFNAQVNMQSWMFLSSYEALRGWLLDNKTFITMAHLGARAFGQISGEVVQTTAWVIKNNHSGFYKPVFFRLVDDNEEHKKNNLLNRMNCFKNTLQNDFKKIPGSPIAYWATLAFINSFLKLPALGTRAVKGLDTNGSIDVFLRRWPEVSINSFDALGKGNSKWFPIAKGGELRKWFGNHEYIINYENDGIELRKNKANLRNKDMYFQEGGTWTVVSTTGFSMRYMPKGFLFDQGGSAVFCENNDELSIYNILACMNSKYINYSASLICPTLNFTTGDVRKFPVIKNNHLEDLAKKAIEISKADWNQFETSWEFSKNKLIEHKGNVAYSYASYCNFQDKLYEQLVNIEKNINNIIEEILGFKIETTENSELITLNSNKIYRYGQSETNDTFLNRHRSDTISELISYSVGCQMGRYSLDREGLVYAHEGNKGFAELAAEGAYKTFPADNDGILPLMDDEWFEDDVTSRVKEFVRTVWGEEHLQENLEFIAESLCLYAIKPKKGESALETIRRYLSTQFWKDHMKMYKKRPIYWLFSSGKEKAFECLVYLHRYNDATLSRMRTEYVVPLLARYQANIDRLNDQLDEASGGEATRLKRERDSLIKKFSELRSYDDRLRHYADMRISIDLDDGVKVNYGKFGDLLADVKAITGNAPEAI</sequence>
<organism>
    <name type="scientific">Escherichia coli O9:H4 (strain HS)</name>
    <dbReference type="NCBI Taxonomy" id="331112"/>
    <lineage>
        <taxon>Bacteria</taxon>
        <taxon>Pseudomonadati</taxon>
        <taxon>Pseudomonadota</taxon>
        <taxon>Gammaproteobacteria</taxon>
        <taxon>Enterobacterales</taxon>
        <taxon>Enterobacteriaceae</taxon>
        <taxon>Escherichia</taxon>
    </lineage>
</organism>
<keyword id="KW-0002">3D-structure</keyword>
<keyword id="KW-0051">Antiviral defense</keyword>
<keyword id="KW-0489">Methyltransferase</keyword>
<keyword id="KW-0949">S-adenosyl-L-methionine</keyword>
<keyword id="KW-0808">Transferase</keyword>
<comment type="function">
    <text evidence="1 2">BREX systems (bacteriophage exclusion) provide immunity against bacteriophage. Part of a type 1 BREX system which protects against dsDNA phage. This system allows phage adsorption but prevents phage DNA replication, without degradation of the phage DNA. Methylation of bacterial DNA by this protein guides self/non-self discrimination. When the brxA-brxB-brxC-pglX-pglZ-brxL genes are transformed into a susceptible E.coli strain (BW25113) they confer very high resistance to infection by bacteriophage VR7 and VpaE1, about 100-fold protection against lambda, T5 and T7 (probably with a mutated 0.3 gene) and no protection against RNA phage Qbeta, ssDNA phage M13 or dSDNA phage T4 and VR5. Glycosylated phage DNA is not susceptible to BREX. The BREX system does not confer resistance to lysogenic lambda phage, i.e. prophage that are integrated into the chromosomal DNA and then induced to form phage.</text>
</comment>
<comment type="function">
    <text evidence="1">Methylates the adenine in the fifth position of the hexamer 5'-GGTAAG-3' in genomic DNA; methylates the same sequence in the few phage that escape the BREX system. Methylated phage are now resistant to BREX, showing immunity is provided by an epigenetic modification. Expression of this protein alone has no effect on phage infection, does not lead to methylated DNA and mildly inhibits growth.</text>
</comment>
<comment type="catalytic activity">
    <reaction evidence="1">
        <text>a 2'-deoxyadenosine in DNA + S-adenosyl-L-methionine = an N(6)-methyl-2'-deoxyadenosine in DNA + S-adenosyl-L-homocysteine + H(+)</text>
        <dbReference type="Rhea" id="RHEA:15197"/>
        <dbReference type="Rhea" id="RHEA-COMP:12418"/>
        <dbReference type="Rhea" id="RHEA-COMP:12419"/>
        <dbReference type="ChEBI" id="CHEBI:15378"/>
        <dbReference type="ChEBI" id="CHEBI:57856"/>
        <dbReference type="ChEBI" id="CHEBI:59789"/>
        <dbReference type="ChEBI" id="CHEBI:90615"/>
        <dbReference type="ChEBI" id="CHEBI:90616"/>
        <dbReference type="EC" id="2.1.1.72"/>
    </reaction>
</comment>
<comment type="activity regulation">
    <text evidence="2 3">(Microbial infection) Methyltransferase activity is inhibited by phage T7 protein OCR (AC P03775, gene 0.3) (PubMed:32515786, PubMed:38989624). Viability of cells overexpressing OCR is unaffected (PubMed:32515786).</text>
</comment>
<comment type="subunit">
    <text evidence="2 3">(Microbial infection) Interacts with phage T7 protein Ocr (AC P03775, gene 0.3) during an infection and when the protein is expressed from a plasmid; this interaction inhibits the enzymatic activity of PglX/BrxX through high-affinity binding (PubMed:32515786, PubMed:38989624). Forms a 2:2 tetrameric complex with phage T7 OCR (PubMed:38989624).</text>
</comment>
<comment type="induction">
    <text evidence="1">Transcribed at slowly increasing levels as cells progress from lag to exponential to stationary phase.</text>
</comment>
<comment type="disruption phenotype">
    <text evidence="1">No methylation of 5'-GGTAAG-3' in chromosomal DNA, BREX no longer confers phage resistance.</text>
</comment>
<comment type="similarity">
    <text evidence="5">Belongs to the methyltransferase superfamily. PglX adenine methyltransferase family.</text>
</comment>
<name>PGLX_ECOHS</name>
<gene>
    <name type="primary">pglX</name>
    <name evidence="4" type="synonym">brxX</name>
    <name type="ordered locus">EcHS_A0339</name>
</gene>
<proteinExistence type="evidence at protein level"/>
<accession>P0DUF9</accession>
<accession>A0A7M3S2P4</accession>
<evidence type="ECO:0000269" key="1">
    <source>
    </source>
</evidence>
<evidence type="ECO:0000269" key="2">
    <source>
    </source>
</evidence>
<evidence type="ECO:0000269" key="3">
    <source>
    </source>
</evidence>
<evidence type="ECO:0000303" key="4">
    <source>
    </source>
</evidence>
<evidence type="ECO:0000305" key="5"/>
<protein>
    <recommendedName>
        <fullName evidence="4">Adenine-specific methyltransferase BrxX</fullName>
        <ecNumber evidence="1 3">2.1.1.72</ecNumber>
    </recommendedName>
    <alternativeName>
        <fullName evidence="5">BREX protein PglX</fullName>
    </alternativeName>
</protein>
<reference key="1">
    <citation type="journal article" date="2008" name="J. Bacteriol.">
        <title>The pangenome structure of Escherichia coli: comparative genomic analysis of E. coli commensal and pathogenic isolates.</title>
        <authorList>
            <person name="Rasko D.A."/>
            <person name="Rosovitz M.J."/>
            <person name="Myers G.S.A."/>
            <person name="Mongodin E.F."/>
            <person name="Fricke W.F."/>
            <person name="Gajer P."/>
            <person name="Crabtree J."/>
            <person name="Sebaihia M."/>
            <person name="Thomson N.R."/>
            <person name="Chaudhuri R."/>
            <person name="Henderson I.R."/>
            <person name="Sperandio V."/>
            <person name="Ravel J."/>
        </authorList>
    </citation>
    <scope>NUCLEOTIDE SEQUENCE [LARGE SCALE GENOMIC DNA]</scope>
    <source>
        <strain>HS</strain>
    </source>
</reference>
<reference key="2">
    <citation type="journal article" date="2019" name="Nucleic Acids Res.">
        <title>BREX system of Escherichia coli distinguishes self from non-self by methylation of a specific DNA site.</title>
        <authorList>
            <person name="Gordeeva J."/>
            <person name="Morozova N."/>
            <person name="Sierro N."/>
            <person name="Isaev A."/>
            <person name="Sinkunas T."/>
            <person name="Tsvetkova K."/>
            <person name="Matlashov M."/>
            <person name="Truncaite L."/>
            <person name="Morgan R.D."/>
            <person name="Ivanov N.V."/>
            <person name="Siksnys V."/>
            <person name="Zeng L."/>
            <person name="Severinov K."/>
        </authorList>
    </citation>
    <scope>FUNCTION IN ANTIVIRAL DEFENSE</scope>
    <scope>FUNCTION AS A DNA METHYLASE</scope>
    <scope>INDUCTION</scope>
    <scope>DISRUPTION PHENOTYPE</scope>
    <source>
        <strain>HS</strain>
    </source>
</reference>
<reference key="3">
    <citation type="journal article" date="2020" name="Nucleic Acids Res.">
        <title>Phage T7 DNA mimic protein Ocr is a potent inhibitor of BREX defence.</title>
        <authorList>
            <person name="Isaev A."/>
            <person name="Drobiazko A."/>
            <person name="Sierro N."/>
            <person name="Gordeeva J."/>
            <person name="Yosef I."/>
            <person name="Qimron U."/>
            <person name="Ivanov N.V."/>
            <person name="Severinov K."/>
        </authorList>
    </citation>
    <scope>FUNCTION IN ANTIVIRAL DEFENSE</scope>
    <scope>ACTIVITY REGULATION</scope>
    <scope>SUBUNIT</scope>
    <scope>INTERACTION WITH PHAGE T7 OCR (MICROBIAL INFECTION)</scope>
    <source>
        <strain>HS</strain>
    </source>
</reference>
<reference key="4">
    <citation type="journal article" date="2024" name="Nucleic Acids Res.">
        <title>Ocr-mediated suppression of BrxX unveils a phage counter-defense mechanism.</title>
        <authorList>
            <person name="Li S."/>
            <person name="Xu T."/>
            <person name="Meng X."/>
            <person name="Yan Y."/>
            <person name="Zhou Y."/>
            <person name="Duan L."/>
            <person name="Tang Y."/>
            <person name="Zhu L."/>
            <person name="Sun L."/>
        </authorList>
    </citation>
    <scope>STRUCTURE BY ELECTRON MICROSCOPY (2.9 ANGSTROMS) IN COMPLEX WITH PHAGE T7 OCR</scope>
    <scope>FUNCTION</scope>
    <scope>ACTIVITY REGULATION</scope>
    <scope>INTERACTION WITH PHAGE T7 OCR (MICROBIAL INFECTION)</scope>
    <scope>CATALYTIC ACTIVITY</scope>
</reference>